<proteinExistence type="evidence at protein level"/>
<evidence type="ECO:0000255" key="1">
    <source>
        <dbReference type="HAMAP-Rule" id="MF_00112"/>
    </source>
</evidence>
<evidence type="ECO:0000269" key="2">
    <source>
    </source>
</evidence>
<evidence type="ECO:0000269" key="3">
    <source>
    </source>
</evidence>
<evidence type="ECO:0000303" key="4">
    <source>
    </source>
</evidence>
<evidence type="ECO:0000305" key="5"/>
<evidence type="ECO:0000305" key="6">
    <source>
    </source>
</evidence>
<evidence type="ECO:0007744" key="7">
    <source>
        <dbReference type="PDB" id="4MM1"/>
    </source>
</evidence>
<evidence type="ECO:0007829" key="8">
    <source>
        <dbReference type="PDB" id="5NDY"/>
    </source>
</evidence>
<evidence type="ECO:0007829" key="9">
    <source>
        <dbReference type="PDB" id="5NEZ"/>
    </source>
</evidence>
<sequence length="245" mass="26119">MKVEDYFHDILRERKIHLTLIDPEEQTPEEAVEIARAAIRGGTDGIMLGGSTTDSSELDNTARALRENIDVPIILFPGNTTGVSRYADAIFFMSLLNSTNPYWIIGAQALGAATVKKMGIEALPMGYLVVEPGGTVGWVGDTKPVPRNKPDIAAAYAMAAEFLGMRLFYLEAGSGAPEHVPEEMIALVKRCTDQILIVGGGIRSGEDAARVAGAGADVVVTGTVVENSDNVEDKIREIVEGMGSV</sequence>
<gene>
    <name type="ordered locus">MTH_552</name>
</gene>
<organism>
    <name type="scientific">Methanothermobacter thermautotrophicus (strain ATCC 29096 / DSM 1053 / JCM 10044 / NBRC 100330 / Delta H)</name>
    <name type="common">Methanobacterium thermoautotrophicum</name>
    <dbReference type="NCBI Taxonomy" id="187420"/>
    <lineage>
        <taxon>Archaea</taxon>
        <taxon>Methanobacteriati</taxon>
        <taxon>Methanobacteriota</taxon>
        <taxon>Methanomada group</taxon>
        <taxon>Methanobacteria</taxon>
        <taxon>Methanobacteriales</taxon>
        <taxon>Methanobacteriaceae</taxon>
        <taxon>Methanothermobacter</taxon>
    </lineage>
</organism>
<dbReference type="EC" id="2.5.1.41" evidence="1 3"/>
<dbReference type="EMBL" id="AE000666">
    <property type="protein sequence ID" value="AAB85058.1"/>
    <property type="status" value="ALT_INIT"/>
    <property type="molecule type" value="Genomic_DNA"/>
</dbReference>
<dbReference type="PIR" id="A69173">
    <property type="entry name" value="A69173"/>
</dbReference>
<dbReference type="RefSeq" id="WP_048060841.1">
    <property type="nucleotide sequence ID" value="NC_000916.1"/>
</dbReference>
<dbReference type="PDB" id="4MM1">
    <property type="method" value="X-ray"/>
    <property type="resolution" value="2.80 A"/>
    <property type="chains" value="A/B/C/D/E/F=1-245"/>
</dbReference>
<dbReference type="PDB" id="5NDY">
    <property type="method" value="X-ray"/>
    <property type="resolution" value="1.95 A"/>
    <property type="chains" value="A/B/C/D/E/F=1-245"/>
</dbReference>
<dbReference type="PDB" id="5NEZ">
    <property type="method" value="X-ray"/>
    <property type="resolution" value="2.39 A"/>
    <property type="chains" value="A/B/C/D/E/F=1-245"/>
</dbReference>
<dbReference type="PDB" id="5NF1">
    <property type="method" value="X-ray"/>
    <property type="resolution" value="2.70 A"/>
    <property type="chains" value="A/B/C/D/E/F=1-245"/>
</dbReference>
<dbReference type="PDBsum" id="4MM1"/>
<dbReference type="PDBsum" id="5NDY"/>
<dbReference type="PDBsum" id="5NEZ"/>
<dbReference type="PDBsum" id="5NF1"/>
<dbReference type="SMR" id="O26652"/>
<dbReference type="FunCoup" id="O26652">
    <property type="interactions" value="1"/>
</dbReference>
<dbReference type="STRING" id="187420.MTH_552"/>
<dbReference type="PaxDb" id="187420-MTH_552"/>
<dbReference type="EnsemblBacteria" id="AAB85058">
    <property type="protein sequence ID" value="AAB85058"/>
    <property type="gene ID" value="MTH_552"/>
</dbReference>
<dbReference type="KEGG" id="mth:MTH_552"/>
<dbReference type="PATRIC" id="fig|187420.15.peg.532"/>
<dbReference type="HOGENOM" id="CLU_068610_0_0_2"/>
<dbReference type="InParanoid" id="O26652"/>
<dbReference type="BioCyc" id="MetaCyc:MONOMER-14508"/>
<dbReference type="BRENDA" id="2.5.1.41">
    <property type="organism ID" value="3256"/>
</dbReference>
<dbReference type="UniPathway" id="UPA00940"/>
<dbReference type="EvolutionaryTrace" id="O26652"/>
<dbReference type="Proteomes" id="UP000005223">
    <property type="component" value="Chromosome"/>
</dbReference>
<dbReference type="GO" id="GO:0005737">
    <property type="term" value="C:cytoplasm"/>
    <property type="evidence" value="ECO:0007669"/>
    <property type="project" value="UniProtKB-SubCell"/>
</dbReference>
<dbReference type="GO" id="GO:0000287">
    <property type="term" value="F:magnesium ion binding"/>
    <property type="evidence" value="ECO:0007669"/>
    <property type="project" value="UniProtKB-UniRule"/>
</dbReference>
<dbReference type="GO" id="GO:0047294">
    <property type="term" value="F:phosphoglycerol geranylgeranyltransferase activity"/>
    <property type="evidence" value="ECO:0007669"/>
    <property type="project" value="UniProtKB-UniRule"/>
</dbReference>
<dbReference type="GO" id="GO:0046474">
    <property type="term" value="P:glycerophospholipid biosynthetic process"/>
    <property type="evidence" value="ECO:0007669"/>
    <property type="project" value="UniProtKB-UniRule"/>
</dbReference>
<dbReference type="CDD" id="cd02812">
    <property type="entry name" value="PcrB_like"/>
    <property type="match status" value="1"/>
</dbReference>
<dbReference type="FunFam" id="3.20.20.390:FF:000001">
    <property type="entry name" value="Heptaprenylglyceryl phosphate synthase"/>
    <property type="match status" value="1"/>
</dbReference>
<dbReference type="Gene3D" id="3.20.20.390">
    <property type="entry name" value="FMN-linked oxidoreductases"/>
    <property type="match status" value="1"/>
</dbReference>
<dbReference type="HAMAP" id="MF_00112">
    <property type="entry name" value="GGGP_HepGP_synthase"/>
    <property type="match status" value="1"/>
</dbReference>
<dbReference type="InterPro" id="IPR039074">
    <property type="entry name" value="GGGP/HepGP_synthase_I"/>
</dbReference>
<dbReference type="InterPro" id="IPR038597">
    <property type="entry name" value="GGGP/HepGP_synthase_sf"/>
</dbReference>
<dbReference type="InterPro" id="IPR008205">
    <property type="entry name" value="GGGP_HepGP_synthase"/>
</dbReference>
<dbReference type="InterPro" id="IPR010946">
    <property type="entry name" value="GGGP_synth"/>
</dbReference>
<dbReference type="NCBIfam" id="TIGR01769">
    <property type="entry name" value="GGGP"/>
    <property type="match status" value="1"/>
</dbReference>
<dbReference type="NCBIfam" id="TIGR01768">
    <property type="entry name" value="GGGP-family"/>
    <property type="match status" value="1"/>
</dbReference>
<dbReference type="NCBIfam" id="NF003198">
    <property type="entry name" value="PRK04169.1-2"/>
    <property type="match status" value="1"/>
</dbReference>
<dbReference type="PANTHER" id="PTHR40029">
    <property type="match status" value="1"/>
</dbReference>
<dbReference type="PANTHER" id="PTHR40029:SF2">
    <property type="entry name" value="HEPTAPRENYLGLYCERYL PHOSPHATE SYNTHASE"/>
    <property type="match status" value="1"/>
</dbReference>
<dbReference type="Pfam" id="PF01884">
    <property type="entry name" value="PcrB"/>
    <property type="match status" value="1"/>
</dbReference>
<dbReference type="SUPFAM" id="SSF51395">
    <property type="entry name" value="FMN-linked oxidoreductases"/>
    <property type="match status" value="1"/>
</dbReference>
<accession>O26652</accession>
<protein>
    <recommendedName>
        <fullName evidence="1">Geranylgeranylglyceryl phosphate synthase</fullName>
        <shortName evidence="1">GGGP synthase</shortName>
        <shortName evidence="1">GGGPS</shortName>
        <shortName evidence="4">MtGGGPS</shortName>
        <ecNumber evidence="1 3">2.5.1.41</ecNumber>
    </recommendedName>
    <alternativeName>
        <fullName evidence="1">(S)-3-O-geranylgeranylglyceryl phosphate synthase</fullName>
    </alternativeName>
    <alternativeName>
        <fullName evidence="1">Phosphoglycerol geranylgeranyltransferase</fullName>
    </alternativeName>
</protein>
<keyword id="KW-0002">3D-structure</keyword>
<keyword id="KW-0963">Cytoplasm</keyword>
<keyword id="KW-0444">Lipid biosynthesis</keyword>
<keyword id="KW-0443">Lipid metabolism</keyword>
<keyword id="KW-0460">Magnesium</keyword>
<keyword id="KW-0479">Metal-binding</keyword>
<keyword id="KW-0594">Phospholipid biosynthesis</keyword>
<keyword id="KW-1208">Phospholipid metabolism</keyword>
<keyword id="KW-1185">Reference proteome</keyword>
<keyword id="KW-0808">Transferase</keyword>
<reference key="1">
    <citation type="journal article" date="1997" name="J. Bacteriol.">
        <title>Complete genome sequence of Methanobacterium thermoautotrophicum deltaH: functional analysis and comparative genomics.</title>
        <authorList>
            <person name="Smith D.R."/>
            <person name="Doucette-Stamm L.A."/>
            <person name="Deloughery C."/>
            <person name="Lee H.-M."/>
            <person name="Dubois J."/>
            <person name="Aldredge T."/>
            <person name="Bashirzadeh R."/>
            <person name="Blakely D."/>
            <person name="Cook R."/>
            <person name="Gilbert K."/>
            <person name="Harrison D."/>
            <person name="Hoang L."/>
            <person name="Keagle P."/>
            <person name="Lumm W."/>
            <person name="Pothier B."/>
            <person name="Qiu D."/>
            <person name="Spadafora R."/>
            <person name="Vicare R."/>
            <person name="Wang Y."/>
            <person name="Wierzbowski J."/>
            <person name="Gibson R."/>
            <person name="Jiwani N."/>
            <person name="Caruso A."/>
            <person name="Bush D."/>
            <person name="Safer H."/>
            <person name="Patwell D."/>
            <person name="Prabhakar S."/>
            <person name="McDougall S."/>
            <person name="Shimer G."/>
            <person name="Goyal A."/>
            <person name="Pietrovski S."/>
            <person name="Church G.M."/>
            <person name="Daniels C.J."/>
            <person name="Mao J.-I."/>
            <person name="Rice P."/>
            <person name="Noelling J."/>
            <person name="Reeve J.N."/>
        </authorList>
    </citation>
    <scope>NUCLEOTIDE SEQUENCE [LARGE SCALE GENOMIC DNA]</scope>
    <source>
        <strain>ATCC 29096 / DSM 1053 / JCM 10044 / NBRC 100330 / Delta H</strain>
    </source>
</reference>
<reference key="2">
    <citation type="journal article" date="2011" name="Angew. Chem. Int. Ed. Engl.">
        <title>Functional assignment of an enzyme that catalyzes the synthesis of an archaea-type ether lipid in bacteria.</title>
        <authorList>
            <person name="Guldan H."/>
            <person name="Matysik F.M."/>
            <person name="Bocola M."/>
            <person name="Sterner R."/>
            <person name="Babinger P."/>
        </authorList>
    </citation>
    <scope>SUBUNIT</scope>
</reference>
<reference evidence="7" key="3">
    <citation type="journal article" date="2014" name="Mol. Microbiol.">
        <title>A comprehensive analysis of the geranylgeranylglyceryl phosphate synthase enzyme family identifies novel members and reveals mechanisms of substrate specificity and quaternary structure organization.</title>
        <authorList>
            <person name="Peterhoff D."/>
            <person name="Beer B."/>
            <person name="Rajendran C."/>
            <person name="Kumpula E.P."/>
            <person name="Kapetaniou E."/>
            <person name="Guldan H."/>
            <person name="Wierenga R.K."/>
            <person name="Sterner R."/>
            <person name="Babinger P."/>
        </authorList>
    </citation>
    <scope>X-RAY CRYSTALLOGRAPHY (2.80 ANGSTROMS) IN COMPLEX WITH GLYCEROL 1-PHOSPHATE</scope>
    <scope>FUNCTION</scope>
    <scope>CATALYTIC ACTIVITY</scope>
    <scope>SUBUNIT</scope>
    <scope>MUTAGENESIS OF VAL-83 AND TRP-138</scope>
</reference>
<feature type="chain" id="PRO_0000138736" description="Geranylgeranylglyceryl phosphate synthase">
    <location>
        <begin position="1"/>
        <end position="245"/>
    </location>
</feature>
<feature type="binding site" evidence="1">
    <location>
        <position position="22"/>
    </location>
    <ligand>
        <name>Mg(2+)</name>
        <dbReference type="ChEBI" id="CHEBI:18420"/>
    </ligand>
</feature>
<feature type="binding site" evidence="1">
    <location>
        <position position="51"/>
    </location>
    <ligand>
        <name>Mg(2+)</name>
        <dbReference type="ChEBI" id="CHEBI:18420"/>
    </ligand>
</feature>
<feature type="binding site" evidence="1 3 7">
    <location>
        <begin position="169"/>
        <end position="175"/>
    </location>
    <ligand>
        <name>sn-glycerol 1-phosphate</name>
        <dbReference type="ChEBI" id="CHEBI:57685"/>
    </ligand>
</feature>
<feature type="binding site" evidence="1 3 7">
    <location>
        <begin position="200"/>
        <end position="201"/>
    </location>
    <ligand>
        <name>sn-glycerol 1-phosphate</name>
        <dbReference type="ChEBI" id="CHEBI:57685"/>
    </ligand>
</feature>
<feature type="binding site" evidence="1 3 7">
    <location>
        <begin position="222"/>
        <end position="223"/>
    </location>
    <ligand>
        <name>sn-glycerol 1-phosphate</name>
        <dbReference type="ChEBI" id="CHEBI:57685"/>
    </ligand>
</feature>
<feature type="mutagenesis site" description="Accepts HepPP as substrate." evidence="3">
    <original>V</original>
    <variation>G</variation>
    <location>
        <position position="83"/>
    </location>
</feature>
<feature type="mutagenesis site" description="Forms homodimers. Shows almost wild-type activity." evidence="3">
    <original>W</original>
    <variation>A</variation>
    <location>
        <position position="138"/>
    </location>
</feature>
<feature type="helix" evidence="8">
    <location>
        <begin position="3"/>
        <end position="11"/>
    </location>
</feature>
<feature type="strand" evidence="8">
    <location>
        <begin position="16"/>
        <end position="21"/>
    </location>
</feature>
<feature type="helix" evidence="8">
    <location>
        <begin position="23"/>
        <end position="25"/>
    </location>
</feature>
<feature type="helix" evidence="8">
    <location>
        <begin position="28"/>
        <end position="40"/>
    </location>
</feature>
<feature type="strand" evidence="8">
    <location>
        <begin position="45"/>
        <end position="48"/>
    </location>
</feature>
<feature type="helix" evidence="8">
    <location>
        <begin position="55"/>
        <end position="68"/>
    </location>
</feature>
<feature type="strand" evidence="8">
    <location>
        <begin position="73"/>
        <end position="75"/>
    </location>
</feature>
<feature type="helix" evidence="8">
    <location>
        <begin position="80"/>
        <end position="82"/>
    </location>
</feature>
<feature type="strand" evidence="8">
    <location>
        <begin position="88"/>
        <end position="95"/>
    </location>
</feature>
<feature type="strand" evidence="8">
    <location>
        <begin position="98"/>
        <end position="100"/>
    </location>
</feature>
<feature type="helix" evidence="8">
    <location>
        <begin position="101"/>
        <end position="104"/>
    </location>
</feature>
<feature type="helix" evidence="8">
    <location>
        <begin position="106"/>
        <end position="118"/>
    </location>
</feature>
<feature type="strand" evidence="8">
    <location>
        <begin position="121"/>
        <end position="130"/>
    </location>
</feature>
<feature type="helix" evidence="8">
    <location>
        <begin position="134"/>
        <end position="139"/>
    </location>
</feature>
<feature type="helix" evidence="8">
    <location>
        <begin position="150"/>
        <end position="162"/>
    </location>
</feature>
<feature type="strand" evidence="8">
    <location>
        <begin position="167"/>
        <end position="171"/>
    </location>
</feature>
<feature type="helix" evidence="8">
    <location>
        <begin position="182"/>
        <end position="191"/>
    </location>
</feature>
<feature type="strand" evidence="8">
    <location>
        <begin position="194"/>
        <end position="201"/>
    </location>
</feature>
<feature type="helix" evidence="8">
    <location>
        <begin position="205"/>
        <end position="213"/>
    </location>
</feature>
<feature type="strand" evidence="8">
    <location>
        <begin position="217"/>
        <end position="221"/>
    </location>
</feature>
<feature type="strand" evidence="9">
    <location>
        <begin position="226"/>
        <end position="228"/>
    </location>
</feature>
<feature type="helix" evidence="8">
    <location>
        <begin position="234"/>
        <end position="243"/>
    </location>
</feature>
<name>GGGPS_METTH</name>
<comment type="function">
    <text evidence="1 3">Prenyltransferase that catalyzes the transfer of the geranylgeranyl moiety of geranylgeranyl diphosphate (GGPP) to the C3 hydroxyl of sn-glycerol-1-phosphate (G1P). This reaction is the first ether-bond-formation step in the biosynthesis of archaeal membrane lipids.</text>
</comment>
<comment type="catalytic activity">
    <reaction evidence="1 3">
        <text>sn-glycerol 1-phosphate + (2E,6E,10E)-geranylgeranyl diphosphate = sn-3-O-(geranylgeranyl)glycerol 1-phosphate + diphosphate</text>
        <dbReference type="Rhea" id="RHEA:23404"/>
        <dbReference type="ChEBI" id="CHEBI:33019"/>
        <dbReference type="ChEBI" id="CHEBI:57677"/>
        <dbReference type="ChEBI" id="CHEBI:57685"/>
        <dbReference type="ChEBI" id="CHEBI:58756"/>
        <dbReference type="EC" id="2.5.1.41"/>
    </reaction>
</comment>
<comment type="cofactor">
    <cofactor evidence="1">
        <name>Mg(2+)</name>
        <dbReference type="ChEBI" id="CHEBI:18420"/>
    </cofactor>
</comment>
<comment type="pathway">
    <text evidence="1">Membrane lipid metabolism; glycerophospholipid metabolism.</text>
</comment>
<comment type="subunit">
    <text evidence="2 3">Homotetramer (PubMed:21761520). Homohexamer (PubMed:24684232).</text>
</comment>
<comment type="subcellular location">
    <subcellularLocation>
        <location evidence="1">Cytoplasm</location>
    </subcellularLocation>
</comment>
<comment type="similarity">
    <text evidence="1 6">Belongs to the GGGP/HepGP synthase family. Group II subfamily.</text>
</comment>
<comment type="sequence caution" evidence="5">
    <conflict type="erroneous initiation">
        <sequence resource="EMBL-CDS" id="AAB85058"/>
    </conflict>
</comment>